<accession>A0A6M3QG69</accession>
<feature type="chain" id="PRO_0000455809" description="Aquaporin PIP2-7">
    <location>
        <begin position="1"/>
        <end position="282"/>
    </location>
</feature>
<feature type="topological domain" description="Cytoplasmic" evidence="8">
    <location>
        <begin position="1"/>
        <end position="38"/>
    </location>
</feature>
<feature type="transmembrane region" description="Helical; Name=1" evidence="2">
    <location>
        <begin position="39"/>
        <end position="59"/>
    </location>
</feature>
<feature type="topological domain" description="Extracellular" evidence="8">
    <location>
        <begin position="60"/>
        <end position="71"/>
    </location>
</feature>
<feature type="transmembrane region" description="Helical; Name=2" evidence="2">
    <location>
        <begin position="72"/>
        <end position="92"/>
    </location>
</feature>
<feature type="topological domain" description="Cytoplasmic" evidence="8">
    <location>
        <begin position="93"/>
        <end position="120"/>
    </location>
</feature>
<feature type="transmembrane region" description="Helical; Name=3" evidence="2">
    <location>
        <begin position="121"/>
        <end position="141"/>
    </location>
</feature>
<feature type="topological domain" description="Extracellular" evidence="8">
    <location>
        <begin position="142"/>
        <end position="162"/>
    </location>
</feature>
<feature type="transmembrane region" description="Helical; Name=4" evidence="2">
    <location>
        <begin position="163"/>
        <end position="183"/>
    </location>
</feature>
<feature type="topological domain" description="Cytoplasmic" evidence="8">
    <location>
        <begin position="184"/>
        <end position="196"/>
    </location>
</feature>
<feature type="transmembrane region" description="Helical; Name=5" evidence="2">
    <location>
        <begin position="197"/>
        <end position="217"/>
    </location>
</feature>
<feature type="topological domain" description="Extracellular" evidence="8">
    <location>
        <begin position="218"/>
        <end position="244"/>
    </location>
</feature>
<feature type="transmembrane region" description="Helical; Name=6" evidence="2">
    <location>
        <begin position="245"/>
        <end position="265"/>
    </location>
</feature>
<feature type="topological domain" description="Cytoplasmic" evidence="8">
    <location>
        <begin position="266"/>
        <end position="282"/>
    </location>
</feature>
<feature type="region of interest" description="Disordered" evidence="3">
    <location>
        <begin position="1"/>
        <end position="21"/>
    </location>
</feature>
<feature type="short sequence motif" description="NPA 1" evidence="2">
    <location>
        <begin position="102"/>
        <end position="104"/>
    </location>
</feature>
<feature type="short sequence motif" description="NPA 2" evidence="2">
    <location>
        <begin position="223"/>
        <end position="225"/>
    </location>
</feature>
<organism>
    <name type="scientific">Musa acuminata</name>
    <name type="common">Banana</name>
    <name type="synonym">Musa cavendishii</name>
    <dbReference type="NCBI Taxonomy" id="4641"/>
    <lineage>
        <taxon>Eukaryota</taxon>
        <taxon>Viridiplantae</taxon>
        <taxon>Streptophyta</taxon>
        <taxon>Embryophyta</taxon>
        <taxon>Tracheophyta</taxon>
        <taxon>Spermatophyta</taxon>
        <taxon>Magnoliopsida</taxon>
        <taxon>Liliopsida</taxon>
        <taxon>Zingiberales</taxon>
        <taxon>Musaceae</taxon>
        <taxon>Musa</taxon>
    </lineage>
</organism>
<gene>
    <name evidence="6 7" type="primary">PIP2-7</name>
</gene>
<comment type="function">
    <text evidence="1 5">Water channel required to facilitate the transport of water across cell membrane; mercury-insensitive (By similarity). Contributes to the tolerance to multiple abiotic stresses including salt (NaCl), cold and water deprivation, by modulating cytosolic K(+)/Na(+) ratio, maintaining osmotic balance, and reducing membrane injury (e.g. oxidative injury) (PubMed:31841963). Also regulates the expression of abscisic acid (ABA)- biosynthetic and -responsive genes during dehydration and salt stresses (PubMed:31841963).</text>
</comment>
<comment type="subcellular location">
    <subcellularLocation>
        <location evidence="1">Cell membrane</location>
        <topology evidence="2">Multi-pass membrane protein</topology>
    </subcellularLocation>
</comment>
<comment type="tissue specificity">
    <text evidence="4">Expressed in roots, leaves and fruits.</text>
</comment>
<comment type="developmental stage">
    <text evidence="4">Present in fruit throughout the development and ripening.</text>
</comment>
<comment type="induction">
    <text evidence="4 5">Slightly induced by salt (NaCl) (PubMed:26307965, PubMed:31841963). Accumulates in response to osmotic (mannitol) and cold treatments (PubMed:31841963).</text>
</comment>
<comment type="domain">
    <text evidence="8">Aquaporins contain two tandem repeats each containing three membrane-spanning domains and a pore-forming loop with the signature motif Asn-Pro-Ala (NPA).</text>
</comment>
<comment type="biotechnology">
    <text evidence="5">Can be used to improve resistance to abiotic stresses such as cold, drought and salt.</text>
</comment>
<comment type="similarity">
    <text evidence="8">Belongs to the MIP/aquaporin (TC 1.A.8) family. PIP (TC 1.A.8.11) subfamily.</text>
</comment>
<keyword id="KW-0938">Abscisic acid signaling pathway</keyword>
<keyword id="KW-1003">Cell membrane</keyword>
<keyword id="KW-0472">Membrane</keyword>
<keyword id="KW-0346">Stress response</keyword>
<keyword id="KW-0812">Transmembrane</keyword>
<keyword id="KW-1133">Transmembrane helix</keyword>
<keyword id="KW-0813">Transport</keyword>
<evidence type="ECO:0000250" key="1">
    <source>
        <dbReference type="UniProtKB" id="P30302"/>
    </source>
</evidence>
<evidence type="ECO:0000255" key="2"/>
<evidence type="ECO:0000256" key="3">
    <source>
        <dbReference type="SAM" id="MobiDB-lite"/>
    </source>
</evidence>
<evidence type="ECO:0000269" key="4">
    <source>
    </source>
</evidence>
<evidence type="ECO:0000269" key="5">
    <source>
    </source>
</evidence>
<evidence type="ECO:0000303" key="6">
    <source>
    </source>
</evidence>
<evidence type="ECO:0000303" key="7">
    <source>
    </source>
</evidence>
<evidence type="ECO:0000305" key="8"/>
<evidence type="ECO:0000312" key="9">
    <source>
        <dbReference type="EMBL" id="QJC58694.1"/>
    </source>
</evidence>
<protein>
    <recommendedName>
        <fullName evidence="6 7">Aquaporin PIP2-7</fullName>
    </recommendedName>
    <alternativeName>
        <fullName evidence="9">PIP2-6-like protein PIP2-7</fullName>
    </alternativeName>
    <alternativeName>
        <fullName evidence="6 7">Plasma membrane intrinsic protein 2-7</fullName>
        <shortName evidence="6 7">MaPIP2-7</shortName>
        <shortName evidence="6 7">MaPIP2;7</shortName>
    </alternativeName>
</protein>
<name>PIP27_MUSAC</name>
<sequence length="282" mass="29941">MSKEVSVEGEQPPVKDYTDPPPEPLLNFGELRLWSFYRALIAEFVATLLFLYVTIATVIGHKEQNAADQCSGVGLLGIAWAFGGMIFILVYCTAGISGGHINPAVTLGLFLARKVSLIRALLYMVAQCLGAIVGVGIVKGIMKHQYNSLGGGANVVAAGYSKGTALGAEIIGTFVLVYTVFSATDPKRSARDSHVPVLAPLPIGFAVFMVHLATIPITGTGINPARSLGAAVIYNQDKPWDDHWILWVGPFVGALAAAAYHQYILRAAAIKALGSFRSNPSN</sequence>
<proteinExistence type="evidence at protein level"/>
<reference key="1">
    <citation type="journal article" date="2020" name="Plant Physiol. Biochem.">
        <title>An aquaporin gene MaPIP2-7 is involved in tolerance to drought, cold and salt stresses in transgenic banana (Musa acuminata L.).</title>
        <authorList>
            <person name="Xu Y."/>
            <person name="Hu W."/>
            <person name="Liu J."/>
            <person name="Song S."/>
            <person name="Hou X."/>
            <person name="Jia C."/>
            <person name="Li J."/>
            <person name="Miao H."/>
            <person name="Wang Z."/>
            <person name="Tie W."/>
            <person name="Xu B."/>
            <person name="Jin Z."/>
        </authorList>
    </citation>
    <scope>NUCLEOTIDE SEQUENCE [MRNA]</scope>
    <scope>FUNCTION</scope>
    <scope>INDUCTION BY SALT; COLD AND OSMOTIC STRESSES</scope>
    <scope>BIOTECHNOLOGY</scope>
    <source>
        <strain>cv. Brazilian (AAA)</strain>
    </source>
</reference>
<reference key="2">
    <citation type="journal article" date="2015" name="Int. J. Mol. Sci.">
        <title>Genome-wide identification and expression analyses of aquaporin gene family during development and abiotic stress in banana.</title>
        <authorList>
            <person name="Hu W."/>
            <person name="Hou X."/>
            <person name="Huang C."/>
            <person name="Yan Y."/>
            <person name="Tie W."/>
            <person name="Ding Z."/>
            <person name="Wei Y."/>
            <person name="Liu J."/>
            <person name="Miao H."/>
            <person name="Lu Z."/>
            <person name="Li M."/>
            <person name="Xu B."/>
            <person name="Jin Z."/>
        </authorList>
    </citation>
    <scope>TISSUE SPECIFICITY</scope>
    <scope>INDUCTION BY SALT</scope>
    <scope>DEVELOPMENTAL STAGE</scope>
    <scope>GENE FAMILY</scope>
    <scope>NOMENCLATURE</scope>
    <source>
        <strain>cv. Cavendish (AAA)</strain>
    </source>
</reference>
<dbReference type="EMBL" id="MN380439">
    <property type="protein sequence ID" value="QJC58694.1"/>
    <property type="molecule type" value="mRNA"/>
</dbReference>
<dbReference type="SMR" id="A0A6M3QG69"/>
<dbReference type="GO" id="GO:0005886">
    <property type="term" value="C:plasma membrane"/>
    <property type="evidence" value="ECO:0007669"/>
    <property type="project" value="UniProtKB-SubCell"/>
</dbReference>
<dbReference type="GO" id="GO:0015267">
    <property type="term" value="F:channel activity"/>
    <property type="evidence" value="ECO:0007669"/>
    <property type="project" value="InterPro"/>
</dbReference>
<dbReference type="GO" id="GO:0009738">
    <property type="term" value="P:abscisic acid-activated signaling pathway"/>
    <property type="evidence" value="ECO:0000314"/>
    <property type="project" value="UniProtKB"/>
</dbReference>
<dbReference type="GO" id="GO:0009409">
    <property type="term" value="P:response to cold"/>
    <property type="evidence" value="ECO:0000314"/>
    <property type="project" value="UniProtKB"/>
</dbReference>
<dbReference type="GO" id="GO:0006970">
    <property type="term" value="P:response to osmotic stress"/>
    <property type="evidence" value="ECO:0000270"/>
    <property type="project" value="UniProtKB"/>
</dbReference>
<dbReference type="GO" id="GO:1902074">
    <property type="term" value="P:response to salt"/>
    <property type="evidence" value="ECO:0000314"/>
    <property type="project" value="UniProtKB"/>
</dbReference>
<dbReference type="GO" id="GO:0009414">
    <property type="term" value="P:response to water deprivation"/>
    <property type="evidence" value="ECO:0000314"/>
    <property type="project" value="UniProtKB"/>
</dbReference>
<dbReference type="CDD" id="cd00333">
    <property type="entry name" value="MIP"/>
    <property type="match status" value="1"/>
</dbReference>
<dbReference type="FunFam" id="1.20.1080.10:FF:000001">
    <property type="entry name" value="Probable aquaporin PIP1-2"/>
    <property type="match status" value="1"/>
</dbReference>
<dbReference type="Gene3D" id="1.20.1080.10">
    <property type="entry name" value="Glycerol uptake facilitator protein"/>
    <property type="match status" value="1"/>
</dbReference>
<dbReference type="InterPro" id="IPR023271">
    <property type="entry name" value="Aquaporin-like"/>
</dbReference>
<dbReference type="InterPro" id="IPR034294">
    <property type="entry name" value="Aquaporin_transptr"/>
</dbReference>
<dbReference type="InterPro" id="IPR000425">
    <property type="entry name" value="MIP"/>
</dbReference>
<dbReference type="InterPro" id="IPR022357">
    <property type="entry name" value="MIP_CS"/>
</dbReference>
<dbReference type="NCBIfam" id="TIGR00861">
    <property type="entry name" value="MIP"/>
    <property type="match status" value="1"/>
</dbReference>
<dbReference type="PANTHER" id="PTHR45687">
    <property type="entry name" value="AQUAPORIN OR AQUAGLYCEROPORIN RELATED"/>
    <property type="match status" value="1"/>
</dbReference>
<dbReference type="Pfam" id="PF00230">
    <property type="entry name" value="MIP"/>
    <property type="match status" value="1"/>
</dbReference>
<dbReference type="PRINTS" id="PR00783">
    <property type="entry name" value="MINTRINSICP"/>
</dbReference>
<dbReference type="SUPFAM" id="SSF81338">
    <property type="entry name" value="Aquaporin-like"/>
    <property type="match status" value="1"/>
</dbReference>
<dbReference type="PROSITE" id="PS00221">
    <property type="entry name" value="MIP"/>
    <property type="match status" value="1"/>
</dbReference>